<accession>Q9KFX8</accession>
<keyword id="KW-0002">3D-structure</keyword>
<keyword id="KW-0051">Antiviral defense</keyword>
<keyword id="KW-0255">Endonuclease</keyword>
<keyword id="KW-0378">Hydrolase</keyword>
<keyword id="KW-0460">Magnesium</keyword>
<keyword id="KW-0479">Metal-binding</keyword>
<keyword id="KW-0540">Nuclease</keyword>
<keyword id="KW-1185">Reference proteome</keyword>
<dbReference type="EC" id="3.1.-.-"/>
<dbReference type="EMBL" id="BA000004">
    <property type="protein sequence ID" value="BAB04061.1"/>
    <property type="molecule type" value="Genomic_DNA"/>
</dbReference>
<dbReference type="PIR" id="F83692">
    <property type="entry name" value="F83692"/>
</dbReference>
<dbReference type="RefSeq" id="WP_010896523.1">
    <property type="nucleotide sequence ID" value="NC_002570.2"/>
</dbReference>
<dbReference type="PDB" id="4ES1">
    <property type="method" value="X-ray"/>
    <property type="resolution" value="1.10 A"/>
    <property type="chains" value="A=1-96"/>
</dbReference>
<dbReference type="PDB" id="4ES2">
    <property type="method" value="X-ray"/>
    <property type="resolution" value="1.30 A"/>
    <property type="chains" value="A=1-96"/>
</dbReference>
<dbReference type="PDB" id="4ES3">
    <property type="method" value="X-ray"/>
    <property type="resolution" value="1.70 A"/>
    <property type="chains" value="A=1-96"/>
</dbReference>
<dbReference type="PDB" id="8D3L">
    <property type="method" value="EM"/>
    <property type="resolution" value="3.49 A"/>
    <property type="chains" value="E/F=1-96"/>
</dbReference>
<dbReference type="PDB" id="8D3M">
    <property type="method" value="EM"/>
    <property type="resolution" value="3.41 A"/>
    <property type="chains" value="E/F=1-96"/>
</dbReference>
<dbReference type="PDB" id="8D3P">
    <property type="method" value="EM"/>
    <property type="resolution" value="4.26 A"/>
    <property type="chains" value="E/F=1-96"/>
</dbReference>
<dbReference type="PDB" id="8D3Q">
    <property type="method" value="EM"/>
    <property type="resolution" value="3.90 A"/>
    <property type="chains" value="E/F=1-96"/>
</dbReference>
<dbReference type="PDBsum" id="4ES1"/>
<dbReference type="PDBsum" id="4ES2"/>
<dbReference type="PDBsum" id="4ES3"/>
<dbReference type="PDBsum" id="8D3L"/>
<dbReference type="PDBsum" id="8D3M"/>
<dbReference type="PDBsum" id="8D3P"/>
<dbReference type="PDBsum" id="8D3Q"/>
<dbReference type="EMDB" id="EMD-20127"/>
<dbReference type="EMDB" id="EMD-20128"/>
<dbReference type="EMDB" id="EMD-20129"/>
<dbReference type="EMDB" id="EMD-20130"/>
<dbReference type="EMDB" id="EMD-20131"/>
<dbReference type="EMDB" id="EMD-27159"/>
<dbReference type="EMDB" id="EMD-27160"/>
<dbReference type="EMDB" id="EMD-27161"/>
<dbReference type="EMDB" id="EMD-27162"/>
<dbReference type="SMR" id="Q9KFX8"/>
<dbReference type="STRING" id="272558.gene:10726195"/>
<dbReference type="KEGG" id="bha:BH0342"/>
<dbReference type="eggNOG" id="COG1343">
    <property type="taxonomic scope" value="Bacteria"/>
</dbReference>
<dbReference type="HOGENOM" id="CLU_161124_3_1_9"/>
<dbReference type="OrthoDB" id="9798176at2"/>
<dbReference type="EvolutionaryTrace" id="Q9KFX8"/>
<dbReference type="Proteomes" id="UP000001258">
    <property type="component" value="Chromosome"/>
</dbReference>
<dbReference type="GO" id="GO:0004520">
    <property type="term" value="F:DNA endonuclease activity"/>
    <property type="evidence" value="ECO:0000314"/>
    <property type="project" value="UniProtKB"/>
</dbReference>
<dbReference type="GO" id="GO:0000287">
    <property type="term" value="F:magnesium ion binding"/>
    <property type="evidence" value="ECO:0000314"/>
    <property type="project" value="UniProtKB"/>
</dbReference>
<dbReference type="GO" id="GO:0042803">
    <property type="term" value="F:protein homodimerization activity"/>
    <property type="evidence" value="ECO:0000314"/>
    <property type="project" value="UniProtKB"/>
</dbReference>
<dbReference type="GO" id="GO:0004521">
    <property type="term" value="F:RNA endonuclease activity"/>
    <property type="evidence" value="ECO:0007669"/>
    <property type="project" value="InterPro"/>
</dbReference>
<dbReference type="GO" id="GO:0051607">
    <property type="term" value="P:defense response to virus"/>
    <property type="evidence" value="ECO:0007669"/>
    <property type="project" value="UniProtKB-UniRule"/>
</dbReference>
<dbReference type="GO" id="GO:0043571">
    <property type="term" value="P:maintenance of CRISPR repeat elements"/>
    <property type="evidence" value="ECO:0007669"/>
    <property type="project" value="UniProtKB-UniRule"/>
</dbReference>
<dbReference type="CDD" id="cd09725">
    <property type="entry name" value="Cas2_I_II_III"/>
    <property type="match status" value="1"/>
</dbReference>
<dbReference type="FunFam" id="3.30.70.240:FF:000044">
    <property type="entry name" value="CRISPR-associated endonuclease Cas2"/>
    <property type="match status" value="1"/>
</dbReference>
<dbReference type="Gene3D" id="3.30.70.240">
    <property type="match status" value="1"/>
</dbReference>
<dbReference type="HAMAP" id="MF_01471">
    <property type="entry name" value="Cas2"/>
    <property type="match status" value="1"/>
</dbReference>
<dbReference type="InterPro" id="IPR021127">
    <property type="entry name" value="CRISPR_associated_Cas2"/>
</dbReference>
<dbReference type="InterPro" id="IPR019199">
    <property type="entry name" value="Virulence_VapD/CRISPR_Cas2"/>
</dbReference>
<dbReference type="NCBIfam" id="TIGR01573">
    <property type="entry name" value="cas2"/>
    <property type="match status" value="1"/>
</dbReference>
<dbReference type="PANTHER" id="PTHR34405">
    <property type="entry name" value="CRISPR-ASSOCIATED ENDORIBONUCLEASE CAS2"/>
    <property type="match status" value="1"/>
</dbReference>
<dbReference type="PANTHER" id="PTHR34405:SF3">
    <property type="entry name" value="CRISPR-ASSOCIATED ENDORIBONUCLEASE CAS2 3"/>
    <property type="match status" value="1"/>
</dbReference>
<dbReference type="Pfam" id="PF09827">
    <property type="entry name" value="CRISPR_Cas2"/>
    <property type="match status" value="1"/>
</dbReference>
<dbReference type="PIRSF" id="PIRSF032582">
    <property type="entry name" value="Cas2"/>
    <property type="match status" value="1"/>
</dbReference>
<dbReference type="SUPFAM" id="SSF143430">
    <property type="entry name" value="TTP0101/SSO1404-like"/>
    <property type="match status" value="1"/>
</dbReference>
<gene>
    <name type="primary">cas2</name>
    <name type="ordered locus">BH0342</name>
</gene>
<evidence type="ECO:0000250" key="1"/>
<evidence type="ECO:0000269" key="2">
    <source>
    </source>
</evidence>
<evidence type="ECO:0000305" key="3"/>
<evidence type="ECO:0007829" key="4">
    <source>
        <dbReference type="PDB" id="4ES1"/>
    </source>
</evidence>
<evidence type="ECO:0007829" key="5">
    <source>
        <dbReference type="PDB" id="8D3L"/>
    </source>
</evidence>
<evidence type="ECO:0007829" key="6">
    <source>
        <dbReference type="PDB" id="8D3M"/>
    </source>
</evidence>
<proteinExistence type="evidence at protein level"/>
<comment type="function">
    <text evidence="1 2">CRISPR (clustered regularly interspaced short palindromic repeat), is an adaptive immune system that provides protection against mobile genetic elements (viruses, transposable elements and conjugative plasmids). CRISPR clusters contain sequences complementary to antecedent mobile elements and target invading nucleic acids. CRISPR clusters are transcribed and processed into CRISPR RNA (crRNA). Involved in the integration of spacer DNA into the CRISPR cassette (By similarity). Functions as a dsDNA-specific endonuclease, acting on circular and linear DNA; has no activity on ssRNA or ssDNA.</text>
</comment>
<comment type="cofactor">
    <cofactor evidence="2">
        <name>Mg(2+)</name>
        <dbReference type="ChEBI" id="CHEBI:18420"/>
    </cofactor>
    <cofactor evidence="2">
        <name>Mn(2+)</name>
        <dbReference type="ChEBI" id="CHEBI:29035"/>
    </cofactor>
    <cofactor evidence="2">
        <name>Fe(2+)</name>
        <dbReference type="ChEBI" id="CHEBI:29033"/>
    </cofactor>
    <cofactor evidence="2">
        <name>Ni(2+)</name>
        <dbReference type="ChEBI" id="CHEBI:49786"/>
    </cofactor>
    <cofactor evidence="2">
        <name>Ca(2+)</name>
        <dbReference type="ChEBI" id="CHEBI:29108"/>
    </cofactor>
    <text evidence="2">Binds 1 Mg(2+) per homodimer, shared between the Asp-8 pair; divalent cations support activity in decreasing order, Mg(2+) &gt;&gt; Mn(2+) &gt; Fe(2+) &gt; Ni(2+) &gt; Ca(2+).</text>
</comment>
<comment type="activity regulation">
    <text evidence="2">Inhibited by EDTA and Zn(2+). Activated by high concentrations of monovalent cation with a preference for K(+) over Na(+).</text>
</comment>
<comment type="biophysicochemical properties">
    <phDependence>
        <text evidence="2">Optimum pH is 7-10.</text>
    </phDependence>
</comment>
<comment type="subunit">
    <text evidence="1">Homodimer, forms a heterotetramer with a Cas1 homodimer.</text>
</comment>
<comment type="similarity">
    <text evidence="3">Belongs to the CRISPR-associated endoribonuclease Cas2 protein family.</text>
</comment>
<reference key="1">
    <citation type="journal article" date="2000" name="Nucleic Acids Res.">
        <title>Complete genome sequence of the alkaliphilic bacterium Bacillus halodurans and genomic sequence comparison with Bacillus subtilis.</title>
        <authorList>
            <person name="Takami H."/>
            <person name="Nakasone K."/>
            <person name="Takaki Y."/>
            <person name="Maeno G."/>
            <person name="Sasaki R."/>
            <person name="Masui N."/>
            <person name="Fuji F."/>
            <person name="Hirama C."/>
            <person name="Nakamura Y."/>
            <person name="Ogasawara N."/>
            <person name="Kuhara S."/>
            <person name="Horikoshi K."/>
        </authorList>
    </citation>
    <scope>NUCLEOTIDE SEQUENCE [LARGE SCALE GENOMIC DNA]</scope>
    <source>
        <strain>ATCC BAA-125 / DSM 18197 / FERM 7344 / JCM 9153 / C-125</strain>
    </source>
</reference>
<reference key="2">
    <citation type="journal article" date="2012" name="J. Biol. Chem.">
        <title>Double-stranded endonuclease activity in Bacillus halodurans clustered regularly interspaced short palindromic repeats (CRISPR)-associated Cas2 protein.</title>
        <authorList>
            <person name="Nam K.H."/>
            <person name="Ding F."/>
            <person name="Haitjema C."/>
            <person name="Huang Q."/>
            <person name="DeLisa M.P."/>
            <person name="Ke A."/>
        </authorList>
    </citation>
    <scope>FUNCTION AS AN ENDONUCLEASE</scope>
    <scope>COFACTOR</scope>
    <scope>ACTIVITY REGULATION</scope>
    <scope>BIOPHYSICOCHEMICAL PROPERTIES</scope>
    <scope>SUBUNIT</scope>
    <scope>X-RAY CRYSTALLOGRAPHY (1.10 ANGSTROMS)</scope>
    <scope>MUTAGENESIS OF ASP-8</scope>
    <source>
        <strain>ATCC BAA-125 / DSM 18197 / FERM 7344 / JCM 9153 / C-125</strain>
    </source>
</reference>
<organism>
    <name type="scientific">Halalkalibacterium halodurans (strain ATCC BAA-125 / DSM 18197 / FERM 7344 / JCM 9153 / C-125)</name>
    <name type="common">Bacillus halodurans</name>
    <dbReference type="NCBI Taxonomy" id="272558"/>
    <lineage>
        <taxon>Bacteria</taxon>
        <taxon>Bacillati</taxon>
        <taxon>Bacillota</taxon>
        <taxon>Bacilli</taxon>
        <taxon>Bacillales</taxon>
        <taxon>Bacillaceae</taxon>
        <taxon>Halalkalibacterium (ex Joshi et al. 2022)</taxon>
    </lineage>
</organism>
<protein>
    <recommendedName>
        <fullName>CRISPR-associated endonuclease Cas2</fullName>
        <ecNumber>3.1.-.-</ecNumber>
    </recommendedName>
</protein>
<name>CAS2_HALH5</name>
<feature type="chain" id="PRO_0000422085" description="CRISPR-associated endonuclease Cas2">
    <location>
        <begin position="1"/>
        <end position="96"/>
    </location>
</feature>
<feature type="binding site" evidence="1">
    <location>
        <position position="8"/>
    </location>
    <ligand>
        <name>Mg(2+)</name>
        <dbReference type="ChEBI" id="CHEBI:18420"/>
        <note>catalytic</note>
    </ligand>
</feature>
<feature type="mutagenesis site" description="Loss of dsDNase activity." evidence="2">
    <original>D</original>
    <variation>N</variation>
    <location>
        <position position="8"/>
    </location>
</feature>
<feature type="strand" evidence="4">
    <location>
        <begin position="1"/>
        <end position="8"/>
    </location>
</feature>
<feature type="strand" evidence="5">
    <location>
        <begin position="11"/>
        <end position="13"/>
    </location>
</feature>
<feature type="helix" evidence="4">
    <location>
        <begin position="14"/>
        <end position="28"/>
    </location>
</feature>
<feature type="strand" evidence="4">
    <location>
        <begin position="31"/>
        <end position="35"/>
    </location>
</feature>
<feature type="strand" evidence="4">
    <location>
        <begin position="38"/>
        <end position="43"/>
    </location>
</feature>
<feature type="helix" evidence="4">
    <location>
        <begin position="45"/>
        <end position="58"/>
    </location>
</feature>
<feature type="turn" evidence="4">
    <location>
        <begin position="61"/>
        <end position="63"/>
    </location>
</feature>
<feature type="strand" evidence="4">
    <location>
        <begin position="65"/>
        <end position="71"/>
    </location>
</feature>
<feature type="helix" evidence="6">
    <location>
        <begin position="75"/>
        <end position="77"/>
    </location>
</feature>
<feature type="strand" evidence="6">
    <location>
        <begin position="79"/>
        <end position="81"/>
    </location>
</feature>
<feature type="strand" evidence="6">
    <location>
        <begin position="90"/>
        <end position="92"/>
    </location>
</feature>
<sequence>MLVLITYDVQTSSMGGTKRLRKVAKACQNYGQRVQNSVFECIVDSTQLTSLKLELTSLIDEEKDSLRIYRLGNNYKTKVEHIGAKPSIDLEDPLIF</sequence>